<evidence type="ECO:0000269" key="1">
    <source>
    </source>
</evidence>
<evidence type="ECO:0000269" key="2">
    <source>
    </source>
</evidence>
<evidence type="ECO:0000305" key="3"/>
<name>RFBV_SALTY</name>
<organism>
    <name type="scientific">Salmonella typhimurium (strain LT2 / SGSC1412 / ATCC 700720)</name>
    <dbReference type="NCBI Taxonomy" id="99287"/>
    <lineage>
        <taxon>Bacteria</taxon>
        <taxon>Pseudomonadati</taxon>
        <taxon>Pseudomonadota</taxon>
        <taxon>Gammaproteobacteria</taxon>
        <taxon>Enterobacterales</taxon>
        <taxon>Enterobacteriaceae</taxon>
        <taxon>Salmonella</taxon>
    </lineage>
</organism>
<dbReference type="EC" id="2.4.1.60"/>
<dbReference type="EMBL" id="X56793">
    <property type="protein sequence ID" value="CAA40125.1"/>
    <property type="molecule type" value="Genomic_DNA"/>
</dbReference>
<dbReference type="EMBL" id="AE006468">
    <property type="protein sequence ID" value="AAL20991.1"/>
    <property type="molecule type" value="Genomic_DNA"/>
</dbReference>
<dbReference type="PIR" id="S15309">
    <property type="entry name" value="S15309"/>
</dbReference>
<dbReference type="RefSeq" id="NP_461032.1">
    <property type="nucleotide sequence ID" value="NC_003197.2"/>
</dbReference>
<dbReference type="RefSeq" id="WP_000908622.1">
    <property type="nucleotide sequence ID" value="NC_003197.2"/>
</dbReference>
<dbReference type="SMR" id="P26401"/>
<dbReference type="STRING" id="99287.STM2087"/>
<dbReference type="CAZy" id="GT2">
    <property type="family name" value="Glycosyltransferase Family 2"/>
</dbReference>
<dbReference type="PaxDb" id="99287-STM2087"/>
<dbReference type="DNASU" id="1253608"/>
<dbReference type="GeneID" id="1253608"/>
<dbReference type="KEGG" id="stm:STM2087"/>
<dbReference type="PATRIC" id="fig|99287.12.peg.2209"/>
<dbReference type="HOGENOM" id="CLU_067064_0_0_6"/>
<dbReference type="OMA" id="GEYCWFL"/>
<dbReference type="PhylomeDB" id="P26401"/>
<dbReference type="BioCyc" id="MetaCyc:STM2087-MONOMER"/>
<dbReference type="BioCyc" id="SENT99287:STM2087-MONOMER"/>
<dbReference type="UniPathway" id="UPA00281"/>
<dbReference type="Proteomes" id="UP000001014">
    <property type="component" value="Chromosome"/>
</dbReference>
<dbReference type="GO" id="GO:0047600">
    <property type="term" value="F:abequosyltransferase activity"/>
    <property type="evidence" value="ECO:0000314"/>
    <property type="project" value="UniProtKB"/>
</dbReference>
<dbReference type="GO" id="GO:0016757">
    <property type="term" value="F:glycosyltransferase activity"/>
    <property type="evidence" value="ECO:0000318"/>
    <property type="project" value="GO_Central"/>
</dbReference>
<dbReference type="GO" id="GO:0009243">
    <property type="term" value="P:O antigen biosynthetic process"/>
    <property type="evidence" value="ECO:0000314"/>
    <property type="project" value="UniProtKB"/>
</dbReference>
<dbReference type="Gene3D" id="3.90.550.10">
    <property type="entry name" value="Spore Coat Polysaccharide Biosynthesis Protein SpsA, Chain A"/>
    <property type="match status" value="1"/>
</dbReference>
<dbReference type="InterPro" id="IPR001173">
    <property type="entry name" value="Glyco_trans_2-like"/>
</dbReference>
<dbReference type="InterPro" id="IPR029044">
    <property type="entry name" value="Nucleotide-diphossugar_trans"/>
</dbReference>
<dbReference type="PANTHER" id="PTHR22916">
    <property type="entry name" value="GLYCOSYLTRANSFERASE"/>
    <property type="match status" value="1"/>
</dbReference>
<dbReference type="PANTHER" id="PTHR22916:SF3">
    <property type="entry name" value="UDP-GLCNAC:BETAGAL BETA-1,3-N-ACETYLGLUCOSAMINYLTRANSFERASE-LIKE PROTEIN 1"/>
    <property type="match status" value="1"/>
</dbReference>
<dbReference type="Pfam" id="PF00535">
    <property type="entry name" value="Glycos_transf_2"/>
    <property type="match status" value="1"/>
</dbReference>
<dbReference type="SUPFAM" id="SSF53448">
    <property type="entry name" value="Nucleotide-diphospho-sugar transferases"/>
    <property type="match status" value="1"/>
</dbReference>
<sequence length="333" mass="38579">MLISFCIPTYNRKEYLEELLNSINNQEKFNLDIEICISDNASTDGTEEMIDVWRNNYNFPIIYRRNSVNLGPDRNFLASVSLANGDYCWIFGSDDALAKDSLAILQTYLDSQADIYLCDRKETGCDLVEIRNPHRSWLRTDDELYVFNNNLDREIYLSRCLSIGGVFSYLSSLIVKKERWDAIDFDASYIGTSYPHVFIMMSVFNTPGCLLHYISKPLVICRGDNDSFEKKGKARRILIDFIAYLKLANDFYSKNISLKRAFENVLLKERPWLYTTLAMACYGNSDEKRDLSEFYAKLGCNKNMINTVLRFGKLAYAVKNITVLKNFTKRIIK</sequence>
<proteinExistence type="evidence at protein level"/>
<comment type="function">
    <text evidence="2">Catalyzes the transfer of CDP-abequose on D-mannosyl-L-rhamnosyl-D-galactose-1-diphospholipid to yield D-abequosyl-D-mannosyl-rhamnosyl-D-galactose-1-diphospholipid.</text>
</comment>
<comment type="catalytic activity">
    <reaction evidence="1">
        <text>CDP-alpha-D-abequose + alpha-D-Man-(1-&gt;4)-alpha-L-Rha-(1-&gt;3)-alpha-D-Gal-di-trans,octa-cis-undecaprenyl diphosphate = alpha-D-Abe-(1-&gt;3)-alpha-D-Man-(1-&gt;4)-alpha-L-Rha-(1-&gt;3)-alpha-D-Gal-di-trans,octa-cis-undecaprenyl diphosphate + CDP + H(+)</text>
        <dbReference type="Rhea" id="RHEA:34183"/>
        <dbReference type="ChEBI" id="CHEBI:15378"/>
        <dbReference type="ChEBI" id="CHEBI:58069"/>
        <dbReference type="ChEBI" id="CHEBI:70784"/>
        <dbReference type="ChEBI" id="CHEBI:157670"/>
        <dbReference type="ChEBI" id="CHEBI:157673"/>
        <dbReference type="EC" id="2.4.1.60"/>
    </reaction>
</comment>
<comment type="pathway">
    <text>Bacterial outer membrane biogenesis; LPS O-antigen biosynthesis.</text>
</comment>
<comment type="similarity">
    <text evidence="3">Belongs to the glycosyltransferase 2 family.</text>
</comment>
<feature type="chain" id="PRO_0000059218" description="Abequosyltransferase RfbV">
    <location>
        <begin position="1"/>
        <end position="333"/>
    </location>
</feature>
<feature type="sequence conflict" description="In Ref. 1; CAA40125." evidence="3" ref="1">
    <original>E</original>
    <variation>Q</variation>
    <location>
        <position position="14"/>
    </location>
</feature>
<protein>
    <recommendedName>
        <fullName>Abequosyltransferase RfbV</fullName>
        <ecNumber>2.4.1.60</ecNumber>
    </recommendedName>
    <alternativeName>
        <fullName>O antigen biosynthesis abequosyltransferase RfbV</fullName>
    </alternativeName>
</protein>
<gene>
    <name type="primary">rfbV</name>
    <name type="synonym">ORF 14.1</name>
    <name type="ordered locus">STM2087</name>
</gene>
<keyword id="KW-0328">Glycosyltransferase</keyword>
<keyword id="KW-0448">Lipopolysaccharide biosynthesis</keyword>
<keyword id="KW-1185">Reference proteome</keyword>
<keyword id="KW-0808">Transferase</keyword>
<accession>P26401</accession>
<reference key="1">
    <citation type="journal article" date="1991" name="Mol. Microbiol.">
        <title>Structure and sequence of the rfb (O antigen) gene cluster of Salmonella serovar typhimurium (strain LT2).</title>
        <authorList>
            <person name="Jiang X.-M."/>
            <person name="Neal B."/>
            <person name="Santiago F."/>
            <person name="Lee S.J."/>
            <person name="Romana L.K."/>
            <person name="Reeves P.R."/>
        </authorList>
    </citation>
    <scope>NUCLEOTIDE SEQUENCE [GENOMIC DNA]</scope>
    <source>
        <strain>LT2</strain>
    </source>
</reference>
<reference key="2">
    <citation type="journal article" date="2001" name="Nature">
        <title>Complete genome sequence of Salmonella enterica serovar Typhimurium LT2.</title>
        <authorList>
            <person name="McClelland M."/>
            <person name="Sanderson K.E."/>
            <person name="Spieth J."/>
            <person name="Clifton S.W."/>
            <person name="Latreille P."/>
            <person name="Courtney L."/>
            <person name="Porwollik S."/>
            <person name="Ali J."/>
            <person name="Dante M."/>
            <person name="Du F."/>
            <person name="Hou S."/>
            <person name="Layman D."/>
            <person name="Leonard S."/>
            <person name="Nguyen C."/>
            <person name="Scott K."/>
            <person name="Holmes A."/>
            <person name="Grewal N."/>
            <person name="Mulvaney E."/>
            <person name="Ryan E."/>
            <person name="Sun H."/>
            <person name="Florea L."/>
            <person name="Miller W."/>
            <person name="Stoneking T."/>
            <person name="Nhan M."/>
            <person name="Waterston R."/>
            <person name="Wilson R.K."/>
        </authorList>
    </citation>
    <scope>NUCLEOTIDE SEQUENCE [LARGE SCALE GENOMIC DNA]</scope>
    <source>
        <strain>LT2 / SGSC1412 / ATCC 700720</strain>
    </source>
</reference>
<reference key="3">
    <citation type="journal article" date="1968" name="J. Biol. Chem.">
        <title>Biosynthesis of a bacterial lipopolysaccharide. VI. Mechanism of incorporation of abequose into the O-antigen of Salmonella typhimurium.</title>
        <authorList>
            <person name="Osborn M.J."/>
            <person name="Weiner I.M."/>
        </authorList>
    </citation>
    <scope>CATALYTIC ACTIVITY</scope>
</reference>
<reference key="4">
    <citation type="journal article" date="1995" name="J. Bacteriol.">
        <title>Transferases of O-antigen biosynthesis in Salmonella enterica: dideoxyhexosyltransferases of groups B and C2 and acetyltransferase of group C2.</title>
        <authorList>
            <person name="Liu D."/>
            <person name="Lindqvist L."/>
            <person name="Reeves P.R."/>
        </authorList>
    </citation>
    <scope>FUNCTION</scope>
</reference>